<sequence length="463" mass="52387">MHEVTVVGAGLVGCLAALAFADRGHKVALYDARPDLRSEAELKNASLRSINLAVSARGIEALRSVDTKMAERVLADIIPMYGRMIHDLQGGQHAQAYGLWGECINSIDRAQLNRTMLDVIEDNANITFFPEHKLTNISLSRKDKKYQRPTSTFETKEGEERVVESDYIIGADGAFSKTRDRLQRYVRMNYAQQYIDCVYLELKIPKADGPDPFSISPNHLHIWPRHKYMLIALANGDGSFTSTLFAPPALMEQVCESQNTFISFFKEQFPDAYELMGESQILESYENNPRSPLVSLKCSPYNHKGECLLVGDAAHCMVPFYGQGMNAGFEDIRVLMEILDEKKWNVEEAFNTYTERRHKDLVAIVDLAMRNYVEMSHSVVSLPYLIRKKVDGVLGRVFSSAWVPLYSMVSFRADIPYSKALSRSARQDRIIGNIVNWTSFAGLVGMGALFYYKGRHLFGRLFE</sequence>
<gene>
    <name evidence="1" type="primary">BNA4</name>
    <name type="ordered locus">YALI0D09867g</name>
</gene>
<name>KMO_YARLI</name>
<comment type="function">
    <text evidence="1">Catalyzes the hydroxylation of L-kynurenine (L-Kyn) to form 3-hydroxy-L-kynurenine (L-3OHKyn). Required for synthesis of quinolinic acid.</text>
</comment>
<comment type="catalytic activity">
    <reaction evidence="1">
        <text>L-kynurenine + NADPH + O2 + H(+) = 3-hydroxy-L-kynurenine + NADP(+) + H2O</text>
        <dbReference type="Rhea" id="RHEA:20545"/>
        <dbReference type="ChEBI" id="CHEBI:15377"/>
        <dbReference type="ChEBI" id="CHEBI:15378"/>
        <dbReference type="ChEBI" id="CHEBI:15379"/>
        <dbReference type="ChEBI" id="CHEBI:57783"/>
        <dbReference type="ChEBI" id="CHEBI:57959"/>
        <dbReference type="ChEBI" id="CHEBI:58125"/>
        <dbReference type="ChEBI" id="CHEBI:58349"/>
        <dbReference type="EC" id="1.14.13.9"/>
    </reaction>
</comment>
<comment type="cofactor">
    <cofactor evidence="1">
        <name>FAD</name>
        <dbReference type="ChEBI" id="CHEBI:57692"/>
    </cofactor>
</comment>
<comment type="pathway">
    <text evidence="1">Cofactor biosynthesis; NAD(+) biosynthesis; quinolinate from L-kynurenine: step 1/3.</text>
</comment>
<comment type="subcellular location">
    <subcellularLocation>
        <location evidence="1">Mitochondrion outer membrane</location>
    </subcellularLocation>
</comment>
<comment type="similarity">
    <text evidence="1">Belongs to the aromatic-ring hydroxylase family. KMO subfamily.</text>
</comment>
<protein>
    <recommendedName>
        <fullName evidence="1">Kynurenine 3-monooxygenase</fullName>
        <ecNumber evidence="1">1.14.13.9</ecNumber>
    </recommendedName>
    <alternativeName>
        <fullName evidence="1">Biosynthesis of nicotinic acid protein 4</fullName>
    </alternativeName>
    <alternativeName>
        <fullName evidence="1">Kynurenine 3-hydroxylase</fullName>
    </alternativeName>
</protein>
<dbReference type="EC" id="1.14.13.9" evidence="1"/>
<dbReference type="EMBL" id="CR382130">
    <property type="protein sequence ID" value="CAG80822.1"/>
    <property type="molecule type" value="Genomic_DNA"/>
</dbReference>
<dbReference type="RefSeq" id="XP_502634.1">
    <property type="nucleotide sequence ID" value="XM_502634.1"/>
</dbReference>
<dbReference type="SMR" id="Q6C9M8"/>
<dbReference type="FunCoup" id="Q6C9M8">
    <property type="interactions" value="796"/>
</dbReference>
<dbReference type="STRING" id="284591.Q6C9M8"/>
<dbReference type="EnsemblFungi" id="CAG80822">
    <property type="protein sequence ID" value="CAG80822"/>
    <property type="gene ID" value="YALI0_D09867g"/>
</dbReference>
<dbReference type="KEGG" id="yli:2910925"/>
<dbReference type="VEuPathDB" id="FungiDB:YALI0_D09867g"/>
<dbReference type="HOGENOM" id="CLU_023210_0_1_1"/>
<dbReference type="InParanoid" id="Q6C9M8"/>
<dbReference type="OMA" id="REFMFIA"/>
<dbReference type="OrthoDB" id="6718at4891"/>
<dbReference type="UniPathway" id="UPA00253">
    <property type="reaction ID" value="UER00328"/>
</dbReference>
<dbReference type="Proteomes" id="UP000001300">
    <property type="component" value="Chromosome D"/>
</dbReference>
<dbReference type="GO" id="GO:0005741">
    <property type="term" value="C:mitochondrial outer membrane"/>
    <property type="evidence" value="ECO:0000318"/>
    <property type="project" value="GO_Central"/>
</dbReference>
<dbReference type="GO" id="GO:0071949">
    <property type="term" value="F:FAD binding"/>
    <property type="evidence" value="ECO:0007669"/>
    <property type="project" value="InterPro"/>
</dbReference>
<dbReference type="GO" id="GO:0004502">
    <property type="term" value="F:kynurenine 3-monooxygenase activity"/>
    <property type="evidence" value="ECO:0000318"/>
    <property type="project" value="GO_Central"/>
</dbReference>
<dbReference type="GO" id="GO:0034354">
    <property type="term" value="P:'de novo' NAD biosynthetic process from L-tryptophan"/>
    <property type="evidence" value="ECO:0007669"/>
    <property type="project" value="UniProtKB-UniRule"/>
</dbReference>
<dbReference type="GO" id="GO:0043420">
    <property type="term" value="P:anthranilate metabolic process"/>
    <property type="evidence" value="ECO:0007669"/>
    <property type="project" value="UniProtKB-UniRule"/>
</dbReference>
<dbReference type="GO" id="GO:0070189">
    <property type="term" value="P:kynurenine metabolic process"/>
    <property type="evidence" value="ECO:0000318"/>
    <property type="project" value="GO_Central"/>
</dbReference>
<dbReference type="GO" id="GO:0006569">
    <property type="term" value="P:L-tryptophan catabolic process"/>
    <property type="evidence" value="ECO:0007669"/>
    <property type="project" value="UniProtKB-UniRule"/>
</dbReference>
<dbReference type="GO" id="GO:0019805">
    <property type="term" value="P:quinolinate biosynthetic process"/>
    <property type="evidence" value="ECO:0007669"/>
    <property type="project" value="UniProtKB-UniRule"/>
</dbReference>
<dbReference type="FunFam" id="3.50.50.60:FF:000129">
    <property type="entry name" value="Kynurenine 3-monooxygenase"/>
    <property type="match status" value="1"/>
</dbReference>
<dbReference type="Gene3D" id="3.50.50.60">
    <property type="entry name" value="FAD/NAD(P)-binding domain"/>
    <property type="match status" value="1"/>
</dbReference>
<dbReference type="HAMAP" id="MF_01971">
    <property type="entry name" value="Kynurenine_monooxygenase"/>
    <property type="match status" value="1"/>
</dbReference>
<dbReference type="InterPro" id="IPR002938">
    <property type="entry name" value="FAD-bd"/>
</dbReference>
<dbReference type="InterPro" id="IPR036188">
    <property type="entry name" value="FAD/NAD-bd_sf"/>
</dbReference>
<dbReference type="InterPro" id="IPR027545">
    <property type="entry name" value="Kynurenine_monooxygenase"/>
</dbReference>
<dbReference type="PANTHER" id="PTHR46028">
    <property type="entry name" value="KYNURENINE 3-MONOOXYGENASE"/>
    <property type="match status" value="1"/>
</dbReference>
<dbReference type="PANTHER" id="PTHR46028:SF2">
    <property type="entry name" value="KYNURENINE 3-MONOOXYGENASE"/>
    <property type="match status" value="1"/>
</dbReference>
<dbReference type="Pfam" id="PF01494">
    <property type="entry name" value="FAD_binding_3"/>
    <property type="match status" value="1"/>
</dbReference>
<dbReference type="PRINTS" id="PR00420">
    <property type="entry name" value="RNGMNOXGNASE"/>
</dbReference>
<dbReference type="SUPFAM" id="SSF51905">
    <property type="entry name" value="FAD/NAD(P)-binding domain"/>
    <property type="match status" value="1"/>
</dbReference>
<evidence type="ECO:0000255" key="1">
    <source>
        <dbReference type="HAMAP-Rule" id="MF_03018"/>
    </source>
</evidence>
<organism>
    <name type="scientific">Yarrowia lipolytica (strain CLIB 122 / E 150)</name>
    <name type="common">Yeast</name>
    <name type="synonym">Candida lipolytica</name>
    <dbReference type="NCBI Taxonomy" id="284591"/>
    <lineage>
        <taxon>Eukaryota</taxon>
        <taxon>Fungi</taxon>
        <taxon>Dikarya</taxon>
        <taxon>Ascomycota</taxon>
        <taxon>Saccharomycotina</taxon>
        <taxon>Dipodascomycetes</taxon>
        <taxon>Dipodascales</taxon>
        <taxon>Dipodascales incertae sedis</taxon>
        <taxon>Yarrowia</taxon>
    </lineage>
</organism>
<proteinExistence type="inferred from homology"/>
<feature type="chain" id="PRO_0000361934" description="Kynurenine 3-monooxygenase">
    <location>
        <begin position="1"/>
        <end position="463"/>
    </location>
</feature>
<reference key="1">
    <citation type="journal article" date="2004" name="Nature">
        <title>Genome evolution in yeasts.</title>
        <authorList>
            <person name="Dujon B."/>
            <person name="Sherman D."/>
            <person name="Fischer G."/>
            <person name="Durrens P."/>
            <person name="Casaregola S."/>
            <person name="Lafontaine I."/>
            <person name="de Montigny J."/>
            <person name="Marck C."/>
            <person name="Neuveglise C."/>
            <person name="Talla E."/>
            <person name="Goffard N."/>
            <person name="Frangeul L."/>
            <person name="Aigle M."/>
            <person name="Anthouard V."/>
            <person name="Babour A."/>
            <person name="Barbe V."/>
            <person name="Barnay S."/>
            <person name="Blanchin S."/>
            <person name="Beckerich J.-M."/>
            <person name="Beyne E."/>
            <person name="Bleykasten C."/>
            <person name="Boisrame A."/>
            <person name="Boyer J."/>
            <person name="Cattolico L."/>
            <person name="Confanioleri F."/>
            <person name="de Daruvar A."/>
            <person name="Despons L."/>
            <person name="Fabre E."/>
            <person name="Fairhead C."/>
            <person name="Ferry-Dumazet H."/>
            <person name="Groppi A."/>
            <person name="Hantraye F."/>
            <person name="Hennequin C."/>
            <person name="Jauniaux N."/>
            <person name="Joyet P."/>
            <person name="Kachouri R."/>
            <person name="Kerrest A."/>
            <person name="Koszul R."/>
            <person name="Lemaire M."/>
            <person name="Lesur I."/>
            <person name="Ma L."/>
            <person name="Muller H."/>
            <person name="Nicaud J.-M."/>
            <person name="Nikolski M."/>
            <person name="Oztas S."/>
            <person name="Ozier-Kalogeropoulos O."/>
            <person name="Pellenz S."/>
            <person name="Potier S."/>
            <person name="Richard G.-F."/>
            <person name="Straub M.-L."/>
            <person name="Suleau A."/>
            <person name="Swennen D."/>
            <person name="Tekaia F."/>
            <person name="Wesolowski-Louvel M."/>
            <person name="Westhof E."/>
            <person name="Wirth B."/>
            <person name="Zeniou-Meyer M."/>
            <person name="Zivanovic Y."/>
            <person name="Bolotin-Fukuhara M."/>
            <person name="Thierry A."/>
            <person name="Bouchier C."/>
            <person name="Caudron B."/>
            <person name="Scarpelli C."/>
            <person name="Gaillardin C."/>
            <person name="Weissenbach J."/>
            <person name="Wincker P."/>
            <person name="Souciet J.-L."/>
        </authorList>
    </citation>
    <scope>NUCLEOTIDE SEQUENCE [LARGE SCALE GENOMIC DNA]</scope>
    <source>
        <strain>CLIB 122 / E 150</strain>
    </source>
</reference>
<keyword id="KW-0274">FAD</keyword>
<keyword id="KW-0285">Flavoprotein</keyword>
<keyword id="KW-0472">Membrane</keyword>
<keyword id="KW-0496">Mitochondrion</keyword>
<keyword id="KW-1000">Mitochondrion outer membrane</keyword>
<keyword id="KW-0503">Monooxygenase</keyword>
<keyword id="KW-0521">NADP</keyword>
<keyword id="KW-0560">Oxidoreductase</keyword>
<keyword id="KW-0662">Pyridine nucleotide biosynthesis</keyword>
<keyword id="KW-1185">Reference proteome</keyword>
<accession>Q6C9M8</accession>